<accession>Q5ZJM3</accession>
<sequence>MAGSAGLSSSPSSPAVRELCKNARDTFLEASRLLLTYADNILRNPYEEKYRSIRNGNPAFSTRLLPVRGAVECLFEMGFQEGETHMVFPKEASIEQLRKVRDLIAVERSSRLNESNQVHRSASSETVAITQAIAHQPSRPAGSVPTPDHQQPEPSLLQSLKMAADILTTLQSKCDHLILAYESTSLQQKALALIPLQQLKEKAQRKLAQATRLDKGEHVNEEDFLLLELLNWFKNDFFHWVDNLPCSRCGGQTEGKRDYLSPTDDDLRWNADRVENHYCSQCQFCNRFPRYNNPEKLLETRRGRCGEWANCFTLCCRAVGFEARYVRDWTDHVWTEVYSASQKRWLHCDPCENVCDKPLLYEIGWGKKLSYVIAFSKDEVVDVTWRYSCKHQEVLTRRTALSEAKLRETINAINKKKQQSLSEGRRKELLERTIVELAEFISPKTPKPGEFGGRTSGSMAWRIARGETGSEERKEVIFIPSEKEKASKLFHLMYNVVEDSYTRISNNNEQITGWGTGIWKAESIARKVETDWKMVYLARKEGSSSASISWKFECKSVGLKIDNISIRTSSQTFHSGRIKWRLYSPTAEVILVGDNSLSSYSDFCGATEVTLEATLSGGDGKAAWQHTQLFRNSLAGCGENCLEMIIKLADL</sequence>
<keyword id="KW-0963">Cytoplasm</keyword>
<keyword id="KW-0378">Hydrolase</keyword>
<keyword id="KW-0479">Metal-binding</keyword>
<keyword id="KW-1185">Reference proteome</keyword>
<keyword id="KW-0862">Zinc</keyword>
<dbReference type="EC" id="3.5.1.52"/>
<dbReference type="EMBL" id="AJ720411">
    <property type="protein sequence ID" value="CAG32070.1"/>
    <property type="molecule type" value="mRNA"/>
</dbReference>
<dbReference type="RefSeq" id="NP_001026159.1">
    <property type="nucleotide sequence ID" value="NM_001030988.1"/>
</dbReference>
<dbReference type="SMR" id="Q5ZJM3"/>
<dbReference type="FunCoup" id="Q5ZJM3">
    <property type="interactions" value="1476"/>
</dbReference>
<dbReference type="STRING" id="9031.ENSGALP00000018418"/>
<dbReference type="GlyGen" id="Q5ZJM3">
    <property type="glycosylation" value="1 site"/>
</dbReference>
<dbReference type="PaxDb" id="9031-ENSGALP00000018418"/>
<dbReference type="GeneID" id="420655"/>
<dbReference type="KEGG" id="gga:420655"/>
<dbReference type="CTD" id="55768"/>
<dbReference type="VEuPathDB" id="HostDB:geneid_420655"/>
<dbReference type="eggNOG" id="KOG0909">
    <property type="taxonomic scope" value="Eukaryota"/>
</dbReference>
<dbReference type="InParanoid" id="Q5ZJM3"/>
<dbReference type="OrthoDB" id="409136at2759"/>
<dbReference type="PhylomeDB" id="Q5ZJM3"/>
<dbReference type="PRO" id="PR:Q5ZJM3"/>
<dbReference type="Proteomes" id="UP000000539">
    <property type="component" value="Unassembled WGS sequence"/>
</dbReference>
<dbReference type="GO" id="GO:0005737">
    <property type="term" value="C:cytoplasm"/>
    <property type="evidence" value="ECO:0000250"/>
    <property type="project" value="UniProtKB"/>
</dbReference>
<dbReference type="GO" id="GO:0005829">
    <property type="term" value="C:cytosol"/>
    <property type="evidence" value="ECO:0000318"/>
    <property type="project" value="GO_Central"/>
</dbReference>
<dbReference type="GO" id="GO:0005634">
    <property type="term" value="C:nucleus"/>
    <property type="evidence" value="ECO:0000318"/>
    <property type="project" value="GO_Central"/>
</dbReference>
<dbReference type="GO" id="GO:0046872">
    <property type="term" value="F:metal ion binding"/>
    <property type="evidence" value="ECO:0007669"/>
    <property type="project" value="UniProtKB-KW"/>
</dbReference>
<dbReference type="GO" id="GO:0000224">
    <property type="term" value="F:peptide-N4-(N-acetyl-beta-glucosaminyl)asparagine amidase activity"/>
    <property type="evidence" value="ECO:0000318"/>
    <property type="project" value="GO_Central"/>
</dbReference>
<dbReference type="GO" id="GO:0006516">
    <property type="term" value="P:glycoprotein catabolic process"/>
    <property type="evidence" value="ECO:0000250"/>
    <property type="project" value="UniProtKB"/>
</dbReference>
<dbReference type="GO" id="GO:0030513">
    <property type="term" value="P:positive regulation of BMP signaling pathway"/>
    <property type="evidence" value="ECO:0000318"/>
    <property type="project" value="GO_Central"/>
</dbReference>
<dbReference type="CDD" id="cd10459">
    <property type="entry name" value="PUB_PNGase"/>
    <property type="match status" value="1"/>
</dbReference>
<dbReference type="FunFam" id="1.20.58.2190:FF:000001">
    <property type="entry name" value="peptide-N(4)-(N-acetyl-beta- glucosaminyl)asparagine amidase"/>
    <property type="match status" value="1"/>
</dbReference>
<dbReference type="FunFam" id="2.20.25.10:FF:000011">
    <property type="entry name" value="peptide-N(4)-(N-acetyl-beta- glucosaminyl)asparagine amidase"/>
    <property type="match status" value="1"/>
</dbReference>
<dbReference type="FunFam" id="2.60.120.1020:FF:000001">
    <property type="entry name" value="Peptide-N(4)-(N-acetyl-beta-glucosaminyl)asparagine amidase"/>
    <property type="match status" value="1"/>
</dbReference>
<dbReference type="Gene3D" id="1.20.58.2190">
    <property type="match status" value="1"/>
</dbReference>
<dbReference type="Gene3D" id="2.20.25.10">
    <property type="match status" value="1"/>
</dbReference>
<dbReference type="Gene3D" id="3.10.620.30">
    <property type="match status" value="1"/>
</dbReference>
<dbReference type="Gene3D" id="2.60.120.1020">
    <property type="entry name" value="Peptide N glycanase, PAW domain"/>
    <property type="match status" value="1"/>
</dbReference>
<dbReference type="InterPro" id="IPR008979">
    <property type="entry name" value="Galactose-bd-like_sf"/>
</dbReference>
<dbReference type="InterPro" id="IPR038765">
    <property type="entry name" value="Papain-like_cys_pep_sf"/>
</dbReference>
<dbReference type="InterPro" id="IPR038680">
    <property type="entry name" value="PAW_sf"/>
</dbReference>
<dbReference type="InterPro" id="IPR006588">
    <property type="entry name" value="Peptide_N_glycanase_PAW_dom"/>
</dbReference>
<dbReference type="InterPro" id="IPR050883">
    <property type="entry name" value="PNGase"/>
</dbReference>
<dbReference type="InterPro" id="IPR036339">
    <property type="entry name" value="PUB-like_dom_sf"/>
</dbReference>
<dbReference type="InterPro" id="IPR018997">
    <property type="entry name" value="PUB_domain"/>
</dbReference>
<dbReference type="InterPro" id="IPR002931">
    <property type="entry name" value="Transglutaminase-like"/>
</dbReference>
<dbReference type="PANTHER" id="PTHR12143">
    <property type="entry name" value="PEPTIDE N-GLYCANASE PNGASE -RELATED"/>
    <property type="match status" value="1"/>
</dbReference>
<dbReference type="PANTHER" id="PTHR12143:SF19">
    <property type="entry name" value="PEPTIDE-N(4)-(N-ACETYL-BETA-GLUCOSAMINYL)ASPARAGINE AMIDASE"/>
    <property type="match status" value="1"/>
</dbReference>
<dbReference type="Pfam" id="PF04721">
    <property type="entry name" value="PAW"/>
    <property type="match status" value="1"/>
</dbReference>
<dbReference type="Pfam" id="PF09409">
    <property type="entry name" value="PUB"/>
    <property type="match status" value="1"/>
</dbReference>
<dbReference type="Pfam" id="PF01841">
    <property type="entry name" value="Transglut_core"/>
    <property type="match status" value="1"/>
</dbReference>
<dbReference type="SMART" id="SM00613">
    <property type="entry name" value="PAW"/>
    <property type="match status" value="1"/>
</dbReference>
<dbReference type="SMART" id="SM00580">
    <property type="entry name" value="PUG"/>
    <property type="match status" value="1"/>
</dbReference>
<dbReference type="SMART" id="SM00460">
    <property type="entry name" value="TGc"/>
    <property type="match status" value="1"/>
</dbReference>
<dbReference type="SUPFAM" id="SSF54001">
    <property type="entry name" value="Cysteine proteinases"/>
    <property type="match status" value="1"/>
</dbReference>
<dbReference type="SUPFAM" id="SSF49785">
    <property type="entry name" value="Galactose-binding domain-like"/>
    <property type="match status" value="1"/>
</dbReference>
<dbReference type="SUPFAM" id="SSF143503">
    <property type="entry name" value="PUG domain-like"/>
    <property type="match status" value="1"/>
</dbReference>
<dbReference type="PROSITE" id="PS51398">
    <property type="entry name" value="PAW"/>
    <property type="match status" value="1"/>
</dbReference>
<organism>
    <name type="scientific">Gallus gallus</name>
    <name type="common">Chicken</name>
    <dbReference type="NCBI Taxonomy" id="9031"/>
    <lineage>
        <taxon>Eukaryota</taxon>
        <taxon>Metazoa</taxon>
        <taxon>Chordata</taxon>
        <taxon>Craniata</taxon>
        <taxon>Vertebrata</taxon>
        <taxon>Euteleostomi</taxon>
        <taxon>Archelosauria</taxon>
        <taxon>Archosauria</taxon>
        <taxon>Dinosauria</taxon>
        <taxon>Saurischia</taxon>
        <taxon>Theropoda</taxon>
        <taxon>Coelurosauria</taxon>
        <taxon>Aves</taxon>
        <taxon>Neognathae</taxon>
        <taxon>Galloanserae</taxon>
        <taxon>Galliformes</taxon>
        <taxon>Phasianidae</taxon>
        <taxon>Phasianinae</taxon>
        <taxon>Gallus</taxon>
    </lineage>
</organism>
<evidence type="ECO:0000250" key="1"/>
<evidence type="ECO:0000255" key="2">
    <source>
        <dbReference type="PROSITE-ProRule" id="PRU00731"/>
    </source>
</evidence>
<name>NGLY1_CHICK</name>
<proteinExistence type="evidence at transcript level"/>
<feature type="chain" id="PRO_0000248975" description="Peptide-N(4)-(N-acetyl-beta-glucosaminyl)asparagine amidase">
    <location>
        <begin position="1"/>
        <end position="651"/>
    </location>
</feature>
<feature type="domain" description="PUB">
    <location>
        <begin position="29"/>
        <end position="90"/>
    </location>
</feature>
<feature type="domain" description="PAW" evidence="2">
    <location>
        <begin position="450"/>
        <end position="651"/>
    </location>
</feature>
<feature type="active site" description="Nucleophile" evidence="1">
    <location>
        <position position="305"/>
    </location>
</feature>
<feature type="active site" evidence="1">
    <location>
        <position position="332"/>
    </location>
</feature>
<feature type="active site" evidence="1">
    <location>
        <position position="349"/>
    </location>
</feature>
<feature type="binding site" evidence="1">
    <location>
        <position position="246"/>
    </location>
    <ligand>
        <name>Zn(2+)</name>
        <dbReference type="ChEBI" id="CHEBI:29105"/>
    </ligand>
</feature>
<feature type="binding site" evidence="1">
    <location>
        <position position="249"/>
    </location>
    <ligand>
        <name>Zn(2+)</name>
        <dbReference type="ChEBI" id="CHEBI:29105"/>
    </ligand>
</feature>
<feature type="binding site" evidence="1">
    <location>
        <position position="279"/>
    </location>
    <ligand>
        <name>Zn(2+)</name>
        <dbReference type="ChEBI" id="CHEBI:29105"/>
    </ligand>
</feature>
<feature type="binding site" evidence="1">
    <location>
        <position position="282"/>
    </location>
    <ligand>
        <name>Zn(2+)</name>
        <dbReference type="ChEBI" id="CHEBI:29105"/>
    </ligand>
</feature>
<protein>
    <recommendedName>
        <fullName>Peptide-N(4)-(N-acetyl-beta-glucosaminyl)asparagine amidase</fullName>
        <shortName>PNGase</shortName>
        <ecNumber>3.5.1.52</ecNumber>
    </recommendedName>
    <alternativeName>
        <fullName>N-glycanase 1</fullName>
    </alternativeName>
    <alternativeName>
        <fullName>Peptide:N-glycanase</fullName>
    </alternativeName>
</protein>
<reference key="1">
    <citation type="journal article" date="2005" name="Genome Biol.">
        <title>Full-length cDNAs from chicken bursal lymphocytes to facilitate gene function analysis.</title>
        <authorList>
            <person name="Caldwell R.B."/>
            <person name="Kierzek A.M."/>
            <person name="Arakawa H."/>
            <person name="Bezzubov Y."/>
            <person name="Zaim J."/>
            <person name="Fiedler P."/>
            <person name="Kutter S."/>
            <person name="Blagodatski A."/>
            <person name="Kostovska D."/>
            <person name="Koter M."/>
            <person name="Plachy J."/>
            <person name="Carninci P."/>
            <person name="Hayashizaki Y."/>
            <person name="Buerstedde J.-M."/>
        </authorList>
    </citation>
    <scope>NUCLEOTIDE SEQUENCE [LARGE SCALE MRNA]</scope>
    <source>
        <strain>CB</strain>
        <tissue>Bursa of Fabricius</tissue>
    </source>
</reference>
<comment type="function">
    <text evidence="1">Specifically deglycosylates the denatured form of N-linked glycoproteins in the cytoplasm and assists their proteasome-mediated degradation. Cleaves the beta-aspartyl-glucosamine (GlcNAc) of the glycan and the amide side chain of Asn, converting Asn to Asp. Prefers proteins containing high-mannose over those bearing complex type oligosaccharides. Can recognize misfolded proteins in the endoplasmic reticulum that are exported to the cytosol to be destroyed and deglycosylate them, while it has no activity toward native proteins. Deglycosylation is a prerequisite for subsequent proteasome-mediated degradation of some, but not all, misfolded glycoproteins (By similarity).</text>
</comment>
<comment type="catalytic activity">
    <reaction>
        <text>Hydrolysis of an N(4)-(acetyl-beta-D-glucosaminyl)asparagine residue in which the glucosamine residue may be further glycosylated, to yield a (substituted) N-acetyl-beta-D-glucosaminylamine and a peptide containing an aspartate residue.</text>
        <dbReference type="EC" id="3.5.1.52"/>
    </reaction>
</comment>
<comment type="cofactor">
    <cofactor evidence="1">
        <name>Zn(2+)</name>
        <dbReference type="ChEBI" id="CHEBI:29105"/>
    </cofactor>
    <text evidence="1">Binds 1 zinc ion per subunit.</text>
</comment>
<comment type="subcellular location">
    <subcellularLocation>
        <location evidence="1">Cytoplasm</location>
    </subcellularLocation>
</comment>
<comment type="similarity">
    <text evidence="2">Belongs to the transglutaminase-like superfamily. PNGase family.</text>
</comment>
<gene>
    <name type="primary">NGLY1</name>
    <name type="ORF">RCJMB04_17c15</name>
</gene>